<proteinExistence type="inferred from homology"/>
<comment type="catalytic activity">
    <reaction evidence="1">
        <text>urea + 2 H2O + H(+) = hydrogencarbonate + 2 NH4(+)</text>
        <dbReference type="Rhea" id="RHEA:20557"/>
        <dbReference type="ChEBI" id="CHEBI:15377"/>
        <dbReference type="ChEBI" id="CHEBI:15378"/>
        <dbReference type="ChEBI" id="CHEBI:16199"/>
        <dbReference type="ChEBI" id="CHEBI:17544"/>
        <dbReference type="ChEBI" id="CHEBI:28938"/>
        <dbReference type="EC" id="3.5.1.5"/>
    </reaction>
</comment>
<comment type="pathway">
    <text evidence="1">Nitrogen metabolism; urea degradation; CO(2) and NH(3) from urea (urease route): step 1/1.</text>
</comment>
<comment type="subunit">
    <text evidence="1">Heterotrimer of UreA (gamma), UreB (beta) and UreC (alpha) subunits. Three heterotrimers associate to form the active enzyme.</text>
</comment>
<comment type="subcellular location">
    <subcellularLocation>
        <location evidence="1">Cytoplasm</location>
    </subcellularLocation>
</comment>
<comment type="similarity">
    <text evidence="1">Belongs to the urease beta subunit family.</text>
</comment>
<feature type="chain" id="PRO_1000070774" description="Urease subunit beta">
    <location>
        <begin position="1"/>
        <end position="101"/>
    </location>
</feature>
<dbReference type="EC" id="3.5.1.5" evidence="1"/>
<dbReference type="EMBL" id="CP000377">
    <property type="protein sequence ID" value="ABF63119.1"/>
    <property type="molecule type" value="Genomic_DNA"/>
</dbReference>
<dbReference type="RefSeq" id="WP_011537734.1">
    <property type="nucleotide sequence ID" value="NC_008044.1"/>
</dbReference>
<dbReference type="SMR" id="Q1GJP7"/>
<dbReference type="STRING" id="292414.TM1040_0386"/>
<dbReference type="KEGG" id="sit:TM1040_0386"/>
<dbReference type="eggNOG" id="COG0832">
    <property type="taxonomic scope" value="Bacteria"/>
</dbReference>
<dbReference type="HOGENOM" id="CLU_129707_1_1_5"/>
<dbReference type="OrthoDB" id="9797217at2"/>
<dbReference type="UniPathway" id="UPA00258">
    <property type="reaction ID" value="UER00370"/>
</dbReference>
<dbReference type="Proteomes" id="UP000000636">
    <property type="component" value="Chromosome"/>
</dbReference>
<dbReference type="GO" id="GO:0035550">
    <property type="term" value="C:urease complex"/>
    <property type="evidence" value="ECO:0007669"/>
    <property type="project" value="InterPro"/>
</dbReference>
<dbReference type="GO" id="GO:0009039">
    <property type="term" value="F:urease activity"/>
    <property type="evidence" value="ECO:0007669"/>
    <property type="project" value="UniProtKB-UniRule"/>
</dbReference>
<dbReference type="GO" id="GO:0043419">
    <property type="term" value="P:urea catabolic process"/>
    <property type="evidence" value="ECO:0007669"/>
    <property type="project" value="UniProtKB-UniRule"/>
</dbReference>
<dbReference type="CDD" id="cd00407">
    <property type="entry name" value="Urease_beta"/>
    <property type="match status" value="1"/>
</dbReference>
<dbReference type="FunFam" id="2.10.150.10:FF:000001">
    <property type="entry name" value="Urease subunit beta"/>
    <property type="match status" value="1"/>
</dbReference>
<dbReference type="Gene3D" id="2.10.150.10">
    <property type="entry name" value="Urease, beta subunit"/>
    <property type="match status" value="1"/>
</dbReference>
<dbReference type="HAMAP" id="MF_01954">
    <property type="entry name" value="Urease_beta"/>
    <property type="match status" value="1"/>
</dbReference>
<dbReference type="InterPro" id="IPR002019">
    <property type="entry name" value="Urease_beta-like"/>
</dbReference>
<dbReference type="InterPro" id="IPR036461">
    <property type="entry name" value="Urease_betasu_sf"/>
</dbReference>
<dbReference type="InterPro" id="IPR050069">
    <property type="entry name" value="Urease_subunit"/>
</dbReference>
<dbReference type="NCBIfam" id="NF009682">
    <property type="entry name" value="PRK13203.1"/>
    <property type="match status" value="1"/>
</dbReference>
<dbReference type="NCBIfam" id="TIGR00192">
    <property type="entry name" value="urease_beta"/>
    <property type="match status" value="1"/>
</dbReference>
<dbReference type="PANTHER" id="PTHR33569">
    <property type="entry name" value="UREASE"/>
    <property type="match status" value="1"/>
</dbReference>
<dbReference type="PANTHER" id="PTHR33569:SF1">
    <property type="entry name" value="UREASE"/>
    <property type="match status" value="1"/>
</dbReference>
<dbReference type="Pfam" id="PF00699">
    <property type="entry name" value="Urease_beta"/>
    <property type="match status" value="1"/>
</dbReference>
<dbReference type="SUPFAM" id="SSF51278">
    <property type="entry name" value="Urease, beta-subunit"/>
    <property type="match status" value="1"/>
</dbReference>
<sequence>MIPGELMPAAGDLTLNEGAEALTLMVANTGDRPVQVGSHYHFAEANPALDFDREAARGLRLDIAAGTAVRFEPGQRREVPLIPIGGARRIFGFNAEIMGDL</sequence>
<gene>
    <name evidence="1" type="primary">ureB</name>
    <name type="ordered locus">TM1040_0386</name>
</gene>
<keyword id="KW-0963">Cytoplasm</keyword>
<keyword id="KW-0378">Hydrolase</keyword>
<keyword id="KW-1185">Reference proteome</keyword>
<organism>
    <name type="scientific">Ruegeria sp. (strain TM1040)</name>
    <name type="common">Silicibacter sp.</name>
    <dbReference type="NCBI Taxonomy" id="292414"/>
    <lineage>
        <taxon>Bacteria</taxon>
        <taxon>Pseudomonadati</taxon>
        <taxon>Pseudomonadota</taxon>
        <taxon>Alphaproteobacteria</taxon>
        <taxon>Rhodobacterales</taxon>
        <taxon>Roseobacteraceae</taxon>
        <taxon>Ruegeria</taxon>
    </lineage>
</organism>
<accession>Q1GJP7</accession>
<protein>
    <recommendedName>
        <fullName evidence="1">Urease subunit beta</fullName>
        <ecNumber evidence="1">3.5.1.5</ecNumber>
    </recommendedName>
    <alternativeName>
        <fullName evidence="1">Urea amidohydrolase subunit beta</fullName>
    </alternativeName>
</protein>
<evidence type="ECO:0000255" key="1">
    <source>
        <dbReference type="HAMAP-Rule" id="MF_01954"/>
    </source>
</evidence>
<reference key="1">
    <citation type="submission" date="2006-05" db="EMBL/GenBank/DDBJ databases">
        <title>Complete sequence of chromosome of Silicibacter sp. TM1040.</title>
        <authorList>
            <consortium name="US DOE Joint Genome Institute"/>
            <person name="Copeland A."/>
            <person name="Lucas S."/>
            <person name="Lapidus A."/>
            <person name="Barry K."/>
            <person name="Detter J.C."/>
            <person name="Glavina del Rio T."/>
            <person name="Hammon N."/>
            <person name="Israni S."/>
            <person name="Dalin E."/>
            <person name="Tice H."/>
            <person name="Pitluck S."/>
            <person name="Brettin T."/>
            <person name="Bruce D."/>
            <person name="Han C."/>
            <person name="Tapia R."/>
            <person name="Goodwin L."/>
            <person name="Thompson L.S."/>
            <person name="Gilna P."/>
            <person name="Schmutz J."/>
            <person name="Larimer F."/>
            <person name="Land M."/>
            <person name="Hauser L."/>
            <person name="Kyrpides N."/>
            <person name="Kim E."/>
            <person name="Belas R."/>
            <person name="Moran M.A."/>
            <person name="Buchan A."/>
            <person name="Gonzalez J.M."/>
            <person name="Schell M.A."/>
            <person name="Sun F."/>
            <person name="Richardson P."/>
        </authorList>
    </citation>
    <scope>NUCLEOTIDE SEQUENCE [LARGE SCALE GENOMIC DNA]</scope>
    <source>
        <strain>TM1040</strain>
    </source>
</reference>
<name>URE2_RUEST</name>